<keyword id="KW-0003">3Fe-4S</keyword>
<keyword id="KW-0004">4Fe-4S</keyword>
<keyword id="KW-0903">Direct protein sequencing</keyword>
<keyword id="KW-0249">Electron transport</keyword>
<keyword id="KW-0408">Iron</keyword>
<keyword id="KW-0411">Iron-sulfur</keyword>
<keyword id="KW-0479">Metal-binding</keyword>
<keyword id="KW-0560">Oxidoreductase</keyword>
<keyword id="KW-0574">Periplasm</keyword>
<keyword id="KW-1185">Reference proteome</keyword>
<keyword id="KW-0763">Sulfate respiration</keyword>
<keyword id="KW-0813">Transport</keyword>
<accession>Q72E85</accession>
<organism>
    <name type="scientific">Nitratidesulfovibrio vulgaris (strain ATCC 29579 / DSM 644 / CCUG 34227 / NCIMB 8303 / VKM B-1760 / Hildenborough)</name>
    <name type="common">Desulfovibrio vulgaris</name>
    <dbReference type="NCBI Taxonomy" id="882"/>
    <lineage>
        <taxon>Bacteria</taxon>
        <taxon>Pseudomonadati</taxon>
        <taxon>Thermodesulfobacteriota</taxon>
        <taxon>Desulfovibrionia</taxon>
        <taxon>Desulfovibrionales</taxon>
        <taxon>Desulfovibrionaceae</taxon>
        <taxon>Nitratidesulfovibrio</taxon>
    </lineage>
</organism>
<gene>
    <name evidence="4" type="primary">qrcC</name>
    <name evidence="7" type="ordered locus">DVU_0693</name>
</gene>
<name>QRCC_NITV2</name>
<dbReference type="EC" id="1.97.-.-"/>
<dbReference type="EMBL" id="AE017285">
    <property type="protein sequence ID" value="AAS95174.1"/>
    <property type="molecule type" value="Genomic_DNA"/>
</dbReference>
<dbReference type="RefSeq" id="WP_010937996.1">
    <property type="nucleotide sequence ID" value="NC_002937.3"/>
</dbReference>
<dbReference type="RefSeq" id="YP_009915.1">
    <property type="nucleotide sequence ID" value="NC_002937.3"/>
</dbReference>
<dbReference type="SMR" id="Q72E85"/>
<dbReference type="IntAct" id="Q72E85">
    <property type="interactions" value="1"/>
</dbReference>
<dbReference type="STRING" id="882.DVU_0693"/>
<dbReference type="PaxDb" id="882-DVU_0693"/>
<dbReference type="EnsemblBacteria" id="AAS95174">
    <property type="protein sequence ID" value="AAS95174"/>
    <property type="gene ID" value="DVU_0693"/>
</dbReference>
<dbReference type="KEGG" id="dvu:DVU_0693"/>
<dbReference type="PATRIC" id="fig|882.5.peg.649"/>
<dbReference type="eggNOG" id="COG0437">
    <property type="taxonomic scope" value="Bacteria"/>
</dbReference>
<dbReference type="HOGENOM" id="CLU_043374_1_0_7"/>
<dbReference type="OrthoDB" id="9789030at2"/>
<dbReference type="PhylomeDB" id="Q72E85"/>
<dbReference type="BioCyc" id="MetaCyc:MONOMER-22156"/>
<dbReference type="Proteomes" id="UP000002194">
    <property type="component" value="Chromosome"/>
</dbReference>
<dbReference type="GO" id="GO:0042597">
    <property type="term" value="C:periplasmic space"/>
    <property type="evidence" value="ECO:0007669"/>
    <property type="project" value="UniProtKB-SubCell"/>
</dbReference>
<dbReference type="GO" id="GO:0051538">
    <property type="term" value="F:3 iron, 4 sulfur cluster binding"/>
    <property type="evidence" value="ECO:0007669"/>
    <property type="project" value="UniProtKB-KW"/>
</dbReference>
<dbReference type="GO" id="GO:0051539">
    <property type="term" value="F:4 iron, 4 sulfur cluster binding"/>
    <property type="evidence" value="ECO:0007669"/>
    <property type="project" value="UniProtKB-KW"/>
</dbReference>
<dbReference type="GO" id="GO:0046872">
    <property type="term" value="F:metal ion binding"/>
    <property type="evidence" value="ECO:0007669"/>
    <property type="project" value="UniProtKB-KW"/>
</dbReference>
<dbReference type="GO" id="GO:0016491">
    <property type="term" value="F:oxidoreductase activity"/>
    <property type="evidence" value="ECO:0007669"/>
    <property type="project" value="UniProtKB-KW"/>
</dbReference>
<dbReference type="GO" id="GO:0009061">
    <property type="term" value="P:anaerobic respiration"/>
    <property type="evidence" value="ECO:0007669"/>
    <property type="project" value="UniProtKB-KW"/>
</dbReference>
<dbReference type="CDD" id="cd10551">
    <property type="entry name" value="PsrB"/>
    <property type="match status" value="1"/>
</dbReference>
<dbReference type="Gene3D" id="3.30.70.20">
    <property type="match status" value="2"/>
</dbReference>
<dbReference type="InterPro" id="IPR017896">
    <property type="entry name" value="4Fe4S_Fe-S-bd"/>
</dbReference>
<dbReference type="InterPro" id="IPR017900">
    <property type="entry name" value="4Fe4S_Fe_S_CS"/>
</dbReference>
<dbReference type="InterPro" id="IPR050954">
    <property type="entry name" value="ET_IronSulfur_Cluster-Binding"/>
</dbReference>
<dbReference type="InterPro" id="IPR053552">
    <property type="entry name" value="Menaquinone_reductase_QrcC"/>
</dbReference>
<dbReference type="NCBIfam" id="NF041782">
    <property type="entry name" value="mnquin_red_QrcC"/>
    <property type="match status" value="1"/>
</dbReference>
<dbReference type="PANTHER" id="PTHR43177">
    <property type="entry name" value="PROTEIN NRFC"/>
    <property type="match status" value="1"/>
</dbReference>
<dbReference type="PANTHER" id="PTHR43177:SF3">
    <property type="entry name" value="PROTEIN NRFC HOMOLOG"/>
    <property type="match status" value="1"/>
</dbReference>
<dbReference type="Pfam" id="PF13247">
    <property type="entry name" value="Fer4_11"/>
    <property type="match status" value="1"/>
</dbReference>
<dbReference type="Pfam" id="PF12797">
    <property type="entry name" value="Fer4_2"/>
    <property type="match status" value="1"/>
</dbReference>
<dbReference type="SUPFAM" id="SSF54862">
    <property type="entry name" value="4Fe-4S ferredoxins"/>
    <property type="match status" value="1"/>
</dbReference>
<dbReference type="PROSITE" id="PS00198">
    <property type="entry name" value="4FE4S_FER_1"/>
    <property type="match status" value="1"/>
</dbReference>
<dbReference type="PROSITE" id="PS51379">
    <property type="entry name" value="4FE4S_FER_2"/>
    <property type="match status" value="3"/>
</dbReference>
<feature type="initiator methionine" description="Removed" evidence="2">
    <location>
        <position position="1"/>
    </location>
</feature>
<feature type="chain" id="PRO_0000438000" description="Menaquinone reductase, iron-sulfur cluster-binding subunit">
    <location>
        <begin position="2"/>
        <end position="255"/>
    </location>
</feature>
<feature type="domain" description="4Fe-4S ferredoxin-type 1" evidence="1">
    <location>
        <begin position="11"/>
        <end position="41"/>
    </location>
</feature>
<feature type="domain" description="4Fe-4S ferredoxin-type 2" evidence="1">
    <location>
        <begin position="66"/>
        <end position="97"/>
    </location>
</feature>
<feature type="domain" description="4Fe-4S ferredoxin-type 3" evidence="1">
    <location>
        <begin position="99"/>
        <end position="128"/>
    </location>
</feature>
<feature type="binding site" evidence="1">
    <location>
        <position position="20"/>
    </location>
    <ligand>
        <name>[4Fe-4S] cluster</name>
        <dbReference type="ChEBI" id="CHEBI:49883"/>
        <label>1</label>
    </ligand>
</feature>
<feature type="binding site" evidence="1">
    <location>
        <position position="23"/>
    </location>
    <ligand>
        <name>[4Fe-4S] cluster</name>
        <dbReference type="ChEBI" id="CHEBI:49883"/>
        <label>1</label>
    </ligand>
</feature>
<feature type="binding site" evidence="1">
    <location>
        <position position="26"/>
    </location>
    <ligand>
        <name>[4Fe-4S] cluster</name>
        <dbReference type="ChEBI" id="CHEBI:49883"/>
        <label>1</label>
    </ligand>
</feature>
<feature type="binding site" evidence="1">
    <location>
        <position position="30"/>
    </location>
    <ligand>
        <name>[4Fe-4S] cluster</name>
        <dbReference type="ChEBI" id="CHEBI:49883"/>
        <label>1</label>
    </ligand>
</feature>
<feature type="binding site" evidence="1">
    <location>
        <position position="75"/>
    </location>
    <ligand>
        <name>[4Fe-4S] cluster</name>
        <dbReference type="ChEBI" id="CHEBI:49883"/>
        <label>2</label>
    </ligand>
</feature>
<feature type="binding site" evidence="1">
    <location>
        <position position="78"/>
    </location>
    <ligand>
        <name>[4Fe-4S] cluster</name>
        <dbReference type="ChEBI" id="CHEBI:49883"/>
        <label>2</label>
    </ligand>
</feature>
<feature type="binding site" evidence="1">
    <location>
        <position position="83"/>
    </location>
    <ligand>
        <name>[4Fe-4S] cluster</name>
        <dbReference type="ChEBI" id="CHEBI:49883"/>
        <label>2</label>
    </ligand>
</feature>
<feature type="binding site" evidence="1">
    <location>
        <position position="87"/>
    </location>
    <ligand>
        <name>[4Fe-4S] cluster</name>
        <dbReference type="ChEBI" id="CHEBI:49883"/>
        <label>2</label>
    </ligand>
</feature>
<feature type="binding site" evidence="1">
    <location>
        <position position="108"/>
    </location>
    <ligand>
        <name>[4Fe-4S] cluster</name>
        <dbReference type="ChEBI" id="CHEBI:49883"/>
        <label>3</label>
    </ligand>
</feature>
<feature type="binding site" evidence="1">
    <location>
        <position position="111"/>
    </location>
    <ligand>
        <name>[4Fe-4S] cluster</name>
        <dbReference type="ChEBI" id="CHEBI:49883"/>
        <label>3</label>
    </ligand>
</feature>
<feature type="binding site" evidence="1">
    <location>
        <position position="114"/>
    </location>
    <ligand>
        <name>[4Fe-4S] cluster</name>
        <dbReference type="ChEBI" id="CHEBI:49883"/>
        <label>3</label>
    </ligand>
</feature>
<feature type="binding site" evidence="1">
    <location>
        <position position="118"/>
    </location>
    <ligand>
        <name>[4Fe-4S] cluster</name>
        <dbReference type="ChEBI" id="CHEBI:49883"/>
        <label>3</label>
    </ligand>
</feature>
<feature type="binding site" evidence="5">
    <location>
        <position position="155"/>
    </location>
    <ligand>
        <name>[3Fe-4S] cluster</name>
        <dbReference type="ChEBI" id="CHEBI:21137"/>
    </ligand>
</feature>
<feature type="binding site" evidence="5">
    <location>
        <position position="158"/>
    </location>
    <ligand>
        <name>[3Fe-4S] cluster</name>
        <dbReference type="ChEBI" id="CHEBI:21137"/>
    </ligand>
</feature>
<feature type="binding site" evidence="5">
    <location>
        <position position="188"/>
    </location>
    <ligand>
        <name>[3Fe-4S] cluster</name>
        <dbReference type="ChEBI" id="CHEBI:21137"/>
    </ligand>
</feature>
<feature type="binding site" evidence="5">
    <location>
        <position position="192"/>
    </location>
    <ligand>
        <name>[3Fe-4S] cluster</name>
        <dbReference type="ChEBI" id="CHEBI:21137"/>
    </ligand>
</feature>
<proteinExistence type="evidence at protein level"/>
<comment type="function">
    <text evidence="2">Component of the respiratory Qrc complex, that catalyzes the reduction of the menaquinone pool using electrons transferred from the reduced periplasmic cytochrome c3, and which is probably involved in sulfate respiration. Is likely essential for growth on H(2) or formate since the periplasmic hydrogenases and/or formate dehydrogenases act as primary electron donors for the Qrc complex. QrcC is an electron-transferring subunit; its cubane iron sulfur clusters form a pathway for electron transfer between the hemes of QrcA and the membrane quinone pool.</text>
</comment>
<comment type="cofactor">
    <cofactor evidence="2 3">
        <name>[4Fe-4S] cluster</name>
        <dbReference type="ChEBI" id="CHEBI:49883"/>
    </cofactor>
    <text evidence="2 3">Binds 3 [4Fe-4S] cluster per subunit.</text>
</comment>
<comment type="cofactor">
    <cofactor evidence="2 3">
        <name>[3Fe-4S] cluster</name>
        <dbReference type="ChEBI" id="CHEBI:21137"/>
    </cofactor>
    <text evidence="2 3">Binds 1 [3Fe-4S] cluster per subunit.</text>
</comment>
<comment type="biophysicochemical properties">
    <kinetics>
        <KM evidence="2">0.8 uM for the cytochrome c3</KM>
        <KM evidence="2">4 uM for menaquinone-4</KM>
        <Vmax evidence="2">92.0 nmol/min/mg enzyme</Vmax>
        <text evidence="2">kcat is 16.6 min(-1). Values are measured with the whole Qrc complex.</text>
    </kinetics>
</comment>
<comment type="subunit">
    <text evidence="2 3">The Qrc complex is composed of four subunits: QrcA, QrcB, QrcC and QrcD (PubMed:20498375). Can form a supercomplex with the [NiFe] hydrogenase HynA1 and the tetraheme Type I cytochrome c3 TpIc(3), its physiological electron donors (PubMed:21651911).</text>
</comment>
<comment type="interaction">
    <interactant intactId="EBI-10070807">
        <id>Q72E85</id>
    </interactant>
    <interactant intactId="EBI-6974672">
        <id>Q72E84</id>
        <label>qrcB</label>
    </interactant>
    <organismsDiffer>false</organismsDiffer>
    <experiments>2</experiments>
</comment>
<comment type="subcellular location">
    <subcellularLocation>
        <location evidence="6">Periplasm</location>
    </subcellularLocation>
</comment>
<sequence length="255" mass="29043">MSSFKEFKIKWGMVIDLDKCTGCGACMVACQAENNIAPQPDASNKLKSLNWLVVYELNNGKPFPEHDVAYLPRPCMQCGKPSCVSVCPVVATDKNEEGGIVSQVYPRCIGCRYCMASCPYHARYFNWFDPTWPEGMDKTLTPDVSVRPRGVVEKCTFCHHRFMQAKDKARVEGRDPSALRDGDYVTSCTEACPNGAIIFGDFNNPEHRVHELHKSKYAFRLLERLGTDPQVYYLSRREWVRRLGDNYLEHEKVKG</sequence>
<reference key="1">
    <citation type="journal article" date="2004" name="Nat. Biotechnol.">
        <title>The genome sequence of the anaerobic, sulfate-reducing bacterium Desulfovibrio vulgaris Hildenborough.</title>
        <authorList>
            <person name="Heidelberg J.F."/>
            <person name="Seshadri R."/>
            <person name="Haveman S.A."/>
            <person name="Hemme C.L."/>
            <person name="Paulsen I.T."/>
            <person name="Kolonay J.F."/>
            <person name="Eisen J.A."/>
            <person name="Ward N.L."/>
            <person name="Methe B.A."/>
            <person name="Brinkac L.M."/>
            <person name="Daugherty S.C."/>
            <person name="DeBoy R.T."/>
            <person name="Dodson R.J."/>
            <person name="Durkin A.S."/>
            <person name="Madupu R."/>
            <person name="Nelson W.C."/>
            <person name="Sullivan S.A."/>
            <person name="Fouts D.E."/>
            <person name="Haft D.H."/>
            <person name="Selengut J."/>
            <person name="Peterson J.D."/>
            <person name="Davidsen T.M."/>
            <person name="Zafar N."/>
            <person name="Zhou L."/>
            <person name="Radune D."/>
            <person name="Dimitrov G."/>
            <person name="Hance M."/>
            <person name="Tran K."/>
            <person name="Khouri H.M."/>
            <person name="Gill J."/>
            <person name="Utterback T.R."/>
            <person name="Feldblyum T.V."/>
            <person name="Wall J.D."/>
            <person name="Voordouw G."/>
            <person name="Fraser C.M."/>
        </authorList>
    </citation>
    <scope>NUCLEOTIDE SEQUENCE [LARGE SCALE GENOMIC DNA]</scope>
    <source>
        <strain>ATCC 29579 / DSM 644 / CCUG 34227 / NCIMB 8303 / VKM B-1760 / Hildenborough</strain>
    </source>
</reference>
<reference key="2">
    <citation type="journal article" date="2010" name="J. Biol. Chem.">
        <title>The Qrc membrane complex, related to the alternative complex III, is a menaquinone reductase involved in sulfate respiration.</title>
        <authorList>
            <person name="Venceslau S.S."/>
            <person name="Lino R.R."/>
            <person name="Pereira I.A."/>
        </authorList>
    </citation>
    <scope>PROTEIN SEQUENCE OF 2-7</scope>
    <scope>FUNCTION</scope>
    <scope>CATALYTIC ACTIVITY</scope>
    <scope>COFACTOR</scope>
    <scope>BIOPHYSICOCHEMICAL PROPERTIES</scope>
    <scope>SUBUNIT</scope>
    <scope>SUBCELLULAR LOCATION</scope>
    <source>
        <strain>ATCC 29579 / DSM 644 / CCUG 34227 / NCIMB 8303 / VKM B-1760 / Hildenborough</strain>
    </source>
</reference>
<reference key="3">
    <citation type="journal article" date="2011" name="FEBS Lett.">
        <title>EPR characterization of the new Qrc complex from sulfate reducing bacteria and its ability to form a supercomplex with hydrogenase and TpIc3.</title>
        <authorList>
            <person name="Venceslau S.S."/>
            <person name="Matos D."/>
            <person name="Pereira I.A."/>
        </authorList>
    </citation>
    <scope>INTERACTION WITH [NIFE] HYDROGENASE AND TPIC(3)</scope>
    <scope>COFACTOR</scope>
    <source>
        <strain>ATCC 29579 / DSM 644 / CCUG 34227 / NCIMB 8303 / VKM B-1760 / Hildenborough</strain>
    </source>
</reference>
<protein>
    <recommendedName>
        <fullName evidence="6">Menaquinone reductase, iron-sulfur cluster-binding subunit</fullName>
        <ecNumber>1.97.-.-</ecNumber>
    </recommendedName>
    <alternativeName>
        <fullName evidence="4">Quinone reductase complex subunit C</fullName>
    </alternativeName>
    <alternativeName>
        <fullName evidence="4">Type I cytochrome c3:menaquinone oxidoreductase subunit C</fullName>
    </alternativeName>
</protein>
<evidence type="ECO:0000255" key="1">
    <source>
        <dbReference type="PROSITE-ProRule" id="PRU00711"/>
    </source>
</evidence>
<evidence type="ECO:0000269" key="2">
    <source>
    </source>
</evidence>
<evidence type="ECO:0000269" key="3">
    <source>
    </source>
</evidence>
<evidence type="ECO:0000303" key="4">
    <source>
    </source>
</evidence>
<evidence type="ECO:0000305" key="5"/>
<evidence type="ECO:0000305" key="6">
    <source>
    </source>
</evidence>
<evidence type="ECO:0000312" key="7">
    <source>
        <dbReference type="EMBL" id="AAS95174.1"/>
    </source>
</evidence>